<organism>
    <name type="scientific">Bacillus cereus (strain AH820)</name>
    <dbReference type="NCBI Taxonomy" id="405535"/>
    <lineage>
        <taxon>Bacteria</taxon>
        <taxon>Bacillati</taxon>
        <taxon>Bacillota</taxon>
        <taxon>Bacilli</taxon>
        <taxon>Bacillales</taxon>
        <taxon>Bacillaceae</taxon>
        <taxon>Bacillus</taxon>
        <taxon>Bacillus cereus group</taxon>
    </lineage>
</organism>
<comment type="subcellular location">
    <subcellularLocation>
        <location evidence="1">Cell membrane</location>
        <topology evidence="1">Multi-pass membrane protein</topology>
    </subcellularLocation>
</comment>
<comment type="similarity">
    <text evidence="3">Belongs to the UPF0754 family.</text>
</comment>
<sequence>MNIWLSMLTTTGLGAIIGGFTNHLAIKMLFRPHRPMYIGKFQVPFTPGLIPKRRDELAVQLGKMVVEHLLTPEGIGKKLTNEEFQKGLIHWAQVEVDKVITNEQSLRHMLGKWDVAHVEKEATEKIEQVITEKIQAFLEEYYTYTWEQALPHSVHEKIENAIPNVSAFILKRAIHFFESEEGKSRLSRMIDDFFASRGALLNLVGMFLGNVSVVDRVQPEVIKFLGQDGTKQLLTDVLQKEWEKLKGRDVKELETFVEKEMIVSSILSAVKVEETVSKFLNQSVQQVCEPVRETIIEKVVPNAVTKGLKWGGENVESILNNLHLAEIVQQEVSTFSTERLEDLVLSITKNELKMITYLGALLGGMIGIVQGLLLLFLK</sequence>
<reference key="1">
    <citation type="submission" date="2008-10" db="EMBL/GenBank/DDBJ databases">
        <title>Genome sequence of Bacillus cereus AH820.</title>
        <authorList>
            <person name="Dodson R.J."/>
            <person name="Durkin A.S."/>
            <person name="Rosovitz M.J."/>
            <person name="Rasko D.A."/>
            <person name="Hoffmaster A."/>
            <person name="Ravel J."/>
            <person name="Sutton G."/>
        </authorList>
    </citation>
    <scope>NUCLEOTIDE SEQUENCE [LARGE SCALE GENOMIC DNA]</scope>
    <source>
        <strain>AH820</strain>
    </source>
</reference>
<dbReference type="EMBL" id="CP001283">
    <property type="protein sequence ID" value="ACK90186.1"/>
    <property type="molecule type" value="Genomic_DNA"/>
</dbReference>
<dbReference type="RefSeq" id="WP_003158405.1">
    <property type="nucleotide sequence ID" value="NC_011773.1"/>
</dbReference>
<dbReference type="KEGG" id="bcu:BCAH820_0954"/>
<dbReference type="HOGENOM" id="CLU_042384_0_0_9"/>
<dbReference type="Proteomes" id="UP000001363">
    <property type="component" value="Chromosome"/>
</dbReference>
<dbReference type="GO" id="GO:0005886">
    <property type="term" value="C:plasma membrane"/>
    <property type="evidence" value="ECO:0007669"/>
    <property type="project" value="UniProtKB-SubCell"/>
</dbReference>
<dbReference type="InterPro" id="IPR007383">
    <property type="entry name" value="DUF445"/>
</dbReference>
<dbReference type="InterPro" id="IPR016991">
    <property type="entry name" value="UCP032178"/>
</dbReference>
<dbReference type="PANTHER" id="PTHR35791">
    <property type="entry name" value="UPF0754 MEMBRANE PROTEIN YHEB"/>
    <property type="match status" value="1"/>
</dbReference>
<dbReference type="PANTHER" id="PTHR35791:SF1">
    <property type="entry name" value="UPF0754 MEMBRANE PROTEIN YHEB"/>
    <property type="match status" value="1"/>
</dbReference>
<dbReference type="Pfam" id="PF04286">
    <property type="entry name" value="DUF445"/>
    <property type="match status" value="1"/>
</dbReference>
<dbReference type="PIRSF" id="PIRSF032178">
    <property type="entry name" value="UCP032178"/>
    <property type="match status" value="1"/>
</dbReference>
<protein>
    <recommendedName>
        <fullName>UPF0754 membrane protein BCAH820_0954</fullName>
    </recommendedName>
</protein>
<feature type="chain" id="PRO_0000388270" description="UPF0754 membrane protein BCAH820_0954">
    <location>
        <begin position="1"/>
        <end position="378"/>
    </location>
</feature>
<feature type="transmembrane region" description="Helical" evidence="2">
    <location>
        <begin position="1"/>
        <end position="21"/>
    </location>
</feature>
<feature type="transmembrane region" description="Helical" evidence="2">
    <location>
        <begin position="357"/>
        <end position="377"/>
    </location>
</feature>
<gene>
    <name type="ordered locus">BCAH820_0954</name>
</gene>
<accession>B7JSD7</accession>
<proteinExistence type="inferred from homology"/>
<name>Y954_BACC0</name>
<keyword id="KW-1003">Cell membrane</keyword>
<keyword id="KW-0472">Membrane</keyword>
<keyword id="KW-0812">Transmembrane</keyword>
<keyword id="KW-1133">Transmembrane helix</keyword>
<evidence type="ECO:0000250" key="1"/>
<evidence type="ECO:0000255" key="2"/>
<evidence type="ECO:0000305" key="3"/>